<gene>
    <name type="primary">cutS</name>
</gene>
<reference key="1">
    <citation type="submission" date="1996-04" db="EMBL/GenBank/DDBJ databases">
        <authorList>
            <person name="Chen C.W."/>
        </authorList>
    </citation>
    <scope>NUCLEOTIDE SEQUENCE [GENOMIC DNA]</scope>
    <source>
        <strain>66 / 1326</strain>
    </source>
</reference>
<reference key="2">
    <citation type="journal article" date="1991" name="Mol. Microbiol.">
        <title>A cloned ompR-like gene of Streptomyces lividans 66 suppresses defective melC1, a putative copper-transfer gene.</title>
        <authorList>
            <person name="Tseng H.-C."/>
            <person name="Chen C.W."/>
        </authorList>
    </citation>
    <scope>NUCLEOTIDE SEQUENCE [GENOMIC DNA] OF 1-190</scope>
    <source>
        <strain>66 / 1326</strain>
    </source>
</reference>
<evidence type="ECO:0000255" key="1"/>
<evidence type="ECO:0000255" key="2">
    <source>
        <dbReference type="PROSITE-ProRule" id="PRU00102"/>
    </source>
</evidence>
<evidence type="ECO:0000255" key="3">
    <source>
        <dbReference type="PROSITE-ProRule" id="PRU00107"/>
    </source>
</evidence>
<evidence type="ECO:0000256" key="4">
    <source>
        <dbReference type="SAM" id="MobiDB-lite"/>
    </source>
</evidence>
<evidence type="ECO:0000305" key="5"/>
<sequence length="414" mass="44496">MATTPAPPGAPPKPTWDPRSATPLPWLRPTIRIRLTLLYGGMFLIAGILLLSIIYLLAAQAVRTGNEPLYKIVDFTDLKVSSSTCPVVDNGGLSLSDFNAAISDCMDHQRKVALDNLLSRSLLALLGLAVIAFAFGYAMAGRVLSPLGRITRTARAVAGSDLSRRIELDGPDDELKELADTFDDMLERLQRAFTAQQRFVGNASHELRTPLAINRTLLEVHLSDPGAPVELQQLGKTLLATNERSELLVEGLLLLARSDNQIVERKPVDLAEVAGQAIDQVHAEAESKGVEVRGTREAAVVQGNGVLLERIALNLVQNAVRYNVAGQGWVEVATAVENGQAVLVVTNTGPVVPAYEVDNLFEPFRRLRTERTGSDKGVGLGLSIARSVARAHGGHISAQPREGGGLVMRVTLPV</sequence>
<dbReference type="EC" id="2.7.13.3"/>
<dbReference type="EMBL" id="X58793">
    <property type="protein sequence ID" value="CAA41600.1"/>
    <property type="molecule type" value="Genomic_DNA"/>
</dbReference>
<dbReference type="PIR" id="S15275">
    <property type="entry name" value="S15275"/>
</dbReference>
<dbReference type="SMR" id="P0A4I8"/>
<dbReference type="GO" id="GO:0005886">
    <property type="term" value="C:plasma membrane"/>
    <property type="evidence" value="ECO:0007669"/>
    <property type="project" value="UniProtKB-SubCell"/>
</dbReference>
<dbReference type="GO" id="GO:0005524">
    <property type="term" value="F:ATP binding"/>
    <property type="evidence" value="ECO:0007669"/>
    <property type="project" value="UniProtKB-KW"/>
</dbReference>
<dbReference type="GO" id="GO:0000155">
    <property type="term" value="F:phosphorelay sensor kinase activity"/>
    <property type="evidence" value="ECO:0007669"/>
    <property type="project" value="InterPro"/>
</dbReference>
<dbReference type="CDD" id="cd06225">
    <property type="entry name" value="HAMP"/>
    <property type="match status" value="1"/>
</dbReference>
<dbReference type="CDD" id="cd00075">
    <property type="entry name" value="HATPase"/>
    <property type="match status" value="1"/>
</dbReference>
<dbReference type="CDD" id="cd00082">
    <property type="entry name" value="HisKA"/>
    <property type="match status" value="1"/>
</dbReference>
<dbReference type="Gene3D" id="1.10.287.130">
    <property type="match status" value="1"/>
</dbReference>
<dbReference type="Gene3D" id="6.10.340.10">
    <property type="match status" value="1"/>
</dbReference>
<dbReference type="Gene3D" id="3.30.565.10">
    <property type="entry name" value="Histidine kinase-like ATPase, C-terminal domain"/>
    <property type="match status" value="1"/>
</dbReference>
<dbReference type="InterPro" id="IPR003660">
    <property type="entry name" value="HAMP_dom"/>
</dbReference>
<dbReference type="InterPro" id="IPR036890">
    <property type="entry name" value="HATPase_C_sf"/>
</dbReference>
<dbReference type="InterPro" id="IPR005467">
    <property type="entry name" value="His_kinase_dom"/>
</dbReference>
<dbReference type="InterPro" id="IPR003661">
    <property type="entry name" value="HisK_dim/P_dom"/>
</dbReference>
<dbReference type="InterPro" id="IPR036097">
    <property type="entry name" value="HisK_dim/P_sf"/>
</dbReference>
<dbReference type="InterPro" id="IPR004358">
    <property type="entry name" value="Sig_transdc_His_kin-like_C"/>
</dbReference>
<dbReference type="InterPro" id="IPR050428">
    <property type="entry name" value="TCS_sensor_his_kinase"/>
</dbReference>
<dbReference type="PANTHER" id="PTHR45436:SF5">
    <property type="entry name" value="SENSOR HISTIDINE KINASE TRCS"/>
    <property type="match status" value="1"/>
</dbReference>
<dbReference type="PANTHER" id="PTHR45436">
    <property type="entry name" value="SENSOR HISTIDINE KINASE YKOH"/>
    <property type="match status" value="1"/>
</dbReference>
<dbReference type="Pfam" id="PF00672">
    <property type="entry name" value="HAMP"/>
    <property type="match status" value="1"/>
</dbReference>
<dbReference type="Pfam" id="PF02518">
    <property type="entry name" value="HATPase_c"/>
    <property type="match status" value="1"/>
</dbReference>
<dbReference type="Pfam" id="PF00512">
    <property type="entry name" value="HisKA"/>
    <property type="match status" value="1"/>
</dbReference>
<dbReference type="PRINTS" id="PR00344">
    <property type="entry name" value="BCTRLSENSOR"/>
</dbReference>
<dbReference type="SMART" id="SM00304">
    <property type="entry name" value="HAMP"/>
    <property type="match status" value="1"/>
</dbReference>
<dbReference type="SMART" id="SM00387">
    <property type="entry name" value="HATPase_c"/>
    <property type="match status" value="1"/>
</dbReference>
<dbReference type="SMART" id="SM00388">
    <property type="entry name" value="HisKA"/>
    <property type="match status" value="1"/>
</dbReference>
<dbReference type="SUPFAM" id="SSF55874">
    <property type="entry name" value="ATPase domain of HSP90 chaperone/DNA topoisomerase II/histidine kinase"/>
    <property type="match status" value="1"/>
</dbReference>
<dbReference type="SUPFAM" id="SSF158472">
    <property type="entry name" value="HAMP domain-like"/>
    <property type="match status" value="1"/>
</dbReference>
<dbReference type="SUPFAM" id="SSF47384">
    <property type="entry name" value="Homodimeric domain of signal transducing histidine kinase"/>
    <property type="match status" value="1"/>
</dbReference>
<dbReference type="PROSITE" id="PS50885">
    <property type="entry name" value="HAMP"/>
    <property type="match status" value="1"/>
</dbReference>
<dbReference type="PROSITE" id="PS50109">
    <property type="entry name" value="HIS_KIN"/>
    <property type="match status" value="1"/>
</dbReference>
<proteinExistence type="inferred from homology"/>
<name>CUTS_STRLI</name>
<comment type="function">
    <text>Member of the two-component regulatory system CutS/CutR, involved in the regulation of copper metabolism.</text>
</comment>
<comment type="catalytic activity">
    <reaction>
        <text>ATP + protein L-histidine = ADP + protein N-phospho-L-histidine.</text>
        <dbReference type="EC" id="2.7.13.3"/>
    </reaction>
</comment>
<comment type="subcellular location">
    <subcellularLocation>
        <location evidence="5">Cell membrane</location>
        <topology evidence="5">Multi-pass membrane protein</topology>
    </subcellularLocation>
</comment>
<feature type="chain" id="PRO_0000074745" description="Sensor protein CutS">
    <location>
        <begin position="1"/>
        <end position="414"/>
    </location>
</feature>
<feature type="transmembrane region" description="Helical" evidence="1">
    <location>
        <begin position="37"/>
        <end position="57"/>
    </location>
</feature>
<feature type="transmembrane region" description="Helical" evidence="1">
    <location>
        <begin position="121"/>
        <end position="141"/>
    </location>
</feature>
<feature type="domain" description="HAMP" evidence="2">
    <location>
        <begin position="142"/>
        <end position="194"/>
    </location>
</feature>
<feature type="domain" description="Histidine kinase" evidence="3">
    <location>
        <begin position="202"/>
        <end position="414"/>
    </location>
</feature>
<feature type="region of interest" description="Disordered" evidence="4">
    <location>
        <begin position="1"/>
        <end position="21"/>
    </location>
</feature>
<feature type="compositionally biased region" description="Pro residues" evidence="4">
    <location>
        <begin position="1"/>
        <end position="15"/>
    </location>
</feature>
<feature type="modified residue" description="Phosphohistidine; by autocatalysis" evidence="3">
    <location>
        <position position="205"/>
    </location>
</feature>
<organism>
    <name type="scientific">Streptomyces lividans</name>
    <dbReference type="NCBI Taxonomy" id="1916"/>
    <lineage>
        <taxon>Bacteria</taxon>
        <taxon>Bacillati</taxon>
        <taxon>Actinomycetota</taxon>
        <taxon>Actinomycetes</taxon>
        <taxon>Kitasatosporales</taxon>
        <taxon>Streptomycetaceae</taxon>
        <taxon>Streptomyces</taxon>
    </lineage>
</organism>
<protein>
    <recommendedName>
        <fullName>Sensor protein CutS</fullName>
        <ecNumber>2.7.13.3</ecNumber>
    </recommendedName>
</protein>
<keyword id="KW-0067">ATP-binding</keyword>
<keyword id="KW-1003">Cell membrane</keyword>
<keyword id="KW-0418">Kinase</keyword>
<keyword id="KW-0472">Membrane</keyword>
<keyword id="KW-0547">Nucleotide-binding</keyword>
<keyword id="KW-0597">Phosphoprotein</keyword>
<keyword id="KW-0808">Transferase</keyword>
<keyword id="KW-0812">Transmembrane</keyword>
<keyword id="KW-1133">Transmembrane helix</keyword>
<keyword id="KW-0902">Two-component regulatory system</keyword>
<accession>P0A4I8</accession>
<accession>Q03757</accession>